<accession>Q15287</accession>
<accession>A8K1P0</accession>
<accession>B4DDU8</accession>
<accession>B4DZU7</accession>
<accession>B7ZA17</accession>
<accession>O75308</accession>
<accession>Q32P25</accession>
<accession>Q8WY42</accession>
<accession>Q9NYG3</accession>
<sequence length="305" mass="34208">MDLSGVKKKSLLGVKENNKKSSTRAPSPTKRKDRSDEKSKDRSKDKGATKESSEKDRGRDKTRKRRSASSGSSSTRSRSSSTSSSGSSTSTGSSSGSSSSSASSRSGSSSTSRSSSSSSSSGSPSPSRRRHDNRRRSRSKSKPPKRDEKERKRRSPSPKPTKVHIGRLTRNVTKDHIMEIFSTYGKIKMIDMPVERMHPHLSKGYAYVEFENPDEAEKALKHMDGGQIDGQEITATAVLAPWPRPPPRRFSPPRRMLPPPPMWRRSPPRMRRRSRSPRRRSPVRRRSRSPGRRRHRSRSSSNSSR</sequence>
<protein>
    <recommendedName>
        <fullName>RNA-binding protein with serine-rich domain 1</fullName>
    </recommendedName>
    <alternativeName>
        <fullName>SR-related protein LDC2</fullName>
    </alternativeName>
</protein>
<proteinExistence type="evidence at protein level"/>
<feature type="chain" id="PRO_0000081816" description="RNA-binding protein with serine-rich domain 1">
    <location>
        <begin position="1"/>
        <end position="305"/>
    </location>
</feature>
<feature type="domain" description="RRM" evidence="1">
    <location>
        <begin position="161"/>
        <end position="240"/>
    </location>
</feature>
<feature type="region of interest" description="Necessary for interaction with the cleaved p110 isoform of CDC2L1">
    <location>
        <begin position="1"/>
        <end position="220"/>
    </location>
</feature>
<feature type="region of interest" description="Disordered" evidence="2">
    <location>
        <begin position="1"/>
        <end position="170"/>
    </location>
</feature>
<feature type="region of interest" description="Necessary for interaction with SRP54, nuclear localization and exon-skipping" evidence="11">
    <location>
        <begin position="1"/>
        <end position="161"/>
    </location>
</feature>
<feature type="region of interest" description="Necessary for interactions with UPF2 and UPF3B and UPF2-dependent NMD">
    <location>
        <begin position="69"/>
        <end position="121"/>
    </location>
</feature>
<feature type="region of interest" description="Necessary for interaction with PNN and exon-skipping">
    <location>
        <begin position="156"/>
        <end position="242"/>
    </location>
</feature>
<feature type="region of interest" description="Interaction with SAP18 and ACIN1" evidence="17">
    <location>
        <begin position="159"/>
        <end position="244"/>
    </location>
</feature>
<feature type="region of interest" description="Necessary for interaction with TRA2B, nuclear localization and exon-skipping" evidence="11">
    <location>
        <begin position="238"/>
        <end position="305"/>
    </location>
</feature>
<feature type="region of interest" description="Disordered" evidence="2">
    <location>
        <begin position="240"/>
        <end position="305"/>
    </location>
</feature>
<feature type="compositionally biased region" description="Basic residues" evidence="2">
    <location>
        <begin position="1"/>
        <end position="10"/>
    </location>
</feature>
<feature type="compositionally biased region" description="Basic and acidic residues" evidence="2">
    <location>
        <begin position="33"/>
        <end position="59"/>
    </location>
</feature>
<feature type="compositionally biased region" description="Low complexity" evidence="2">
    <location>
        <begin position="68"/>
        <end position="126"/>
    </location>
</feature>
<feature type="compositionally biased region" description="Basic residues" evidence="2">
    <location>
        <begin position="127"/>
        <end position="143"/>
    </location>
</feature>
<feature type="compositionally biased region" description="Basic residues" evidence="2">
    <location>
        <begin position="151"/>
        <end position="167"/>
    </location>
</feature>
<feature type="compositionally biased region" description="Pro residues" evidence="2">
    <location>
        <begin position="242"/>
        <end position="262"/>
    </location>
</feature>
<feature type="compositionally biased region" description="Basic residues" evidence="2">
    <location>
        <begin position="266"/>
        <end position="298"/>
    </location>
</feature>
<feature type="modified residue" description="Phosphoserine; by CK2" evidence="13">
    <location>
        <position position="53"/>
    </location>
</feature>
<feature type="modified residue" description="Phosphoserine" evidence="26">
    <location>
        <position position="155"/>
    </location>
</feature>
<feature type="modified residue" description="Phosphoserine" evidence="26">
    <location>
        <position position="157"/>
    </location>
</feature>
<feature type="modified residue" description="Phosphothreonine" evidence="26">
    <location>
        <position position="161"/>
    </location>
</feature>
<feature type="modified residue" description="N6-acetyllysine" evidence="25">
    <location>
        <position position="218"/>
    </location>
</feature>
<feature type="cross-link" description="Glycyl lysine isopeptide (Lys-Gly) (interchain with G-Cter in SUMO2)" evidence="27">
    <location>
        <position position="7"/>
    </location>
</feature>
<feature type="cross-link" description="Glycyl lysine isopeptide (Lys-Gly) (interchain with G-Cter in SUMO2)" evidence="27">
    <location>
        <position position="15"/>
    </location>
</feature>
<feature type="splice variant" id="VSP_016243" description="In isoform 2 and isoform 3." evidence="22 23">
    <location>
        <begin position="2"/>
        <end position="24"/>
    </location>
</feature>
<feature type="splice variant" id="VSP_037601" description="In isoform 3." evidence="22">
    <location>
        <begin position="69"/>
        <end position="82"/>
    </location>
</feature>
<feature type="mutagenesis site" description="Abolishes phosphorylation by CSNK2A1 and partially reduces splicing stimulation. Does not abolish interaction with CSNK2A1 and subcellular localization." evidence="13">
    <original>S</original>
    <variation>A</variation>
    <location>
        <position position="53"/>
    </location>
</feature>
<feature type="mutagenesis site" description="Partially reduces splicing stimulation. Does not abolish interaction with CSNK2A1 and subcellular localization." evidence="13">
    <original>S</original>
    <variation>E</variation>
    <location>
        <position position="53"/>
    </location>
</feature>
<feature type="mutagenesis site" description="Impairs interaction with SAP18." evidence="19">
    <original>N</original>
    <variation>R</variation>
    <location>
        <position position="171"/>
    </location>
</feature>
<feature type="mutagenesis site" description="Abolishes exon-skipping." evidence="11">
    <original>Y</original>
    <variation>A</variation>
    <location>
        <position position="205"/>
    </location>
</feature>
<feature type="mutagenesis site" description="Abolishes exon-skipping." evidence="11">
    <original>Y</original>
    <variation>A</variation>
    <location>
        <position position="207"/>
    </location>
</feature>
<feature type="sequence conflict" description="In Ref. 4; BAG56859." evidence="24" ref="4">
    <original>K</original>
    <variation>E</variation>
    <location>
        <position position="32"/>
    </location>
</feature>
<feature type="sequence conflict" description="In Ref. 2; AAC39791." evidence="24" ref="2">
    <original>R</original>
    <variation>G</variation>
    <location>
        <position position="66"/>
    </location>
</feature>
<feature type="sequence conflict" description="In Ref. 4; BAG56859." evidence="24" ref="4">
    <original>R</original>
    <variation>G</variation>
    <location>
        <position position="249"/>
    </location>
</feature>
<feature type="strand" evidence="28">
    <location>
        <begin position="162"/>
        <end position="166"/>
    </location>
</feature>
<feature type="helix" evidence="28">
    <location>
        <begin position="174"/>
        <end position="182"/>
    </location>
</feature>
<feature type="strand" evidence="28">
    <location>
        <begin position="187"/>
        <end position="191"/>
    </location>
</feature>
<feature type="strand" evidence="28">
    <location>
        <begin position="198"/>
        <end position="202"/>
    </location>
</feature>
<feature type="strand" evidence="28">
    <location>
        <begin position="204"/>
        <end position="212"/>
    </location>
</feature>
<feature type="helix" evidence="28">
    <location>
        <begin position="213"/>
        <end position="223"/>
    </location>
</feature>
<feature type="strand" evidence="28">
    <location>
        <begin position="234"/>
        <end position="238"/>
    </location>
</feature>
<evidence type="ECO:0000255" key="1">
    <source>
        <dbReference type="PROSITE-ProRule" id="PRU00176"/>
    </source>
</evidence>
<evidence type="ECO:0000256" key="2">
    <source>
        <dbReference type="SAM" id="MobiDB-lite"/>
    </source>
</evidence>
<evidence type="ECO:0000269" key="3">
    <source>
    </source>
</evidence>
<evidence type="ECO:0000269" key="4">
    <source>
    </source>
</evidence>
<evidence type="ECO:0000269" key="5">
    <source>
    </source>
</evidence>
<evidence type="ECO:0000269" key="6">
    <source>
    </source>
</evidence>
<evidence type="ECO:0000269" key="7">
    <source>
    </source>
</evidence>
<evidence type="ECO:0000269" key="8">
    <source>
    </source>
</evidence>
<evidence type="ECO:0000269" key="9">
    <source>
    </source>
</evidence>
<evidence type="ECO:0000269" key="10">
    <source>
    </source>
</evidence>
<evidence type="ECO:0000269" key="11">
    <source>
    </source>
</evidence>
<evidence type="ECO:0000269" key="12">
    <source>
    </source>
</evidence>
<evidence type="ECO:0000269" key="13">
    <source>
    </source>
</evidence>
<evidence type="ECO:0000269" key="14">
    <source>
    </source>
</evidence>
<evidence type="ECO:0000269" key="15">
    <source>
    </source>
</evidence>
<evidence type="ECO:0000269" key="16">
    <source>
    </source>
</evidence>
<evidence type="ECO:0000269" key="17">
    <source>
    </source>
</evidence>
<evidence type="ECO:0000269" key="18">
    <source>
    </source>
</evidence>
<evidence type="ECO:0000269" key="19">
    <source>
    </source>
</evidence>
<evidence type="ECO:0000269" key="20">
    <source>
    </source>
</evidence>
<evidence type="ECO:0000269" key="21">
    <source>
    </source>
</evidence>
<evidence type="ECO:0000303" key="22">
    <source>
    </source>
</evidence>
<evidence type="ECO:0000303" key="23">
    <source ref="3"/>
</evidence>
<evidence type="ECO:0000305" key="24"/>
<evidence type="ECO:0007744" key="25">
    <source>
    </source>
</evidence>
<evidence type="ECO:0007744" key="26">
    <source>
    </source>
</evidence>
<evidence type="ECO:0007744" key="27">
    <source>
    </source>
</evidence>
<evidence type="ECO:0007829" key="28">
    <source>
        <dbReference type="PDB" id="4A8X"/>
    </source>
</evidence>
<keyword id="KW-0002">3D-structure</keyword>
<keyword id="KW-0007">Acetylation</keyword>
<keyword id="KW-0025">Alternative splicing</keyword>
<keyword id="KW-0963">Cytoplasm</keyword>
<keyword id="KW-1017">Isopeptide bond</keyword>
<keyword id="KW-0507">mRNA processing</keyword>
<keyword id="KW-0508">mRNA splicing</keyword>
<keyword id="KW-0866">Nonsense-mediated mRNA decay</keyword>
<keyword id="KW-0539">Nucleus</keyword>
<keyword id="KW-0597">Phosphoprotein</keyword>
<keyword id="KW-1267">Proteomics identification</keyword>
<keyword id="KW-1185">Reference proteome</keyword>
<keyword id="KW-0694">RNA-binding</keyword>
<keyword id="KW-0832">Ubl conjugation</keyword>
<organism>
    <name type="scientific">Homo sapiens</name>
    <name type="common">Human</name>
    <dbReference type="NCBI Taxonomy" id="9606"/>
    <lineage>
        <taxon>Eukaryota</taxon>
        <taxon>Metazoa</taxon>
        <taxon>Chordata</taxon>
        <taxon>Craniata</taxon>
        <taxon>Vertebrata</taxon>
        <taxon>Euteleostomi</taxon>
        <taxon>Mammalia</taxon>
        <taxon>Eutheria</taxon>
        <taxon>Euarchontoglires</taxon>
        <taxon>Primates</taxon>
        <taxon>Haplorrhini</taxon>
        <taxon>Catarrhini</taxon>
        <taxon>Hominidae</taxon>
        <taxon>Homo</taxon>
    </lineage>
</organism>
<gene>
    <name type="primary">RNPS1</name>
    <name type="synonym">LDC2</name>
</gene>
<reference key="1">
    <citation type="journal article" date="1995" name="Gene">
        <title>Identification and characterisation of a novel human RNA-binding protein.</title>
        <authorList>
            <person name="Badolato J."/>
            <person name="Gardiner E."/>
            <person name="Morrison N."/>
            <person name="Eisman J."/>
        </authorList>
    </citation>
    <scope>NUCLEOTIDE SEQUENCE [MRNA] (ISOFORM 1)</scope>
    <scope>TISSUE SPECIFICITY</scope>
    <source>
        <tissue>Brain</tissue>
    </source>
</reference>
<reference key="2">
    <citation type="journal article" date="1998" name="J. Cell Sci.">
        <title>The RNP protein, RNPS1, associates with specific isoforms of the p34cdc2-related PITSLRE protein kinases in vivo.</title>
        <authorList>
            <person name="Loyer P."/>
            <person name="Trembley J.H."/>
            <person name="Lahti J.M."/>
            <person name="Kidd V.J."/>
        </authorList>
    </citation>
    <scope>NUCLEOTIDE SEQUENCE [MRNA] (ISOFORM 1)</scope>
    <scope>INTERACTION WITH CDC2L1</scope>
    <scope>SUBCELLULAR LOCATION</scope>
    <source>
        <tissue>B-cell</tissue>
    </source>
</reference>
<reference key="3">
    <citation type="submission" date="2000-05" db="EMBL/GenBank/DDBJ databases">
        <title>Identification of an alternatively spliced form of RNPS1.</title>
        <authorList>
            <person name="Harada K."/>
            <person name="Yang D."/>
            <person name="Yamada A."/>
            <person name="Shichijo S."/>
            <person name="Itoh K."/>
        </authorList>
    </citation>
    <scope>NUCLEOTIDE SEQUENCE [MRNA] (ISOFORM 2)</scope>
    <source>
        <tissue>Thymus</tissue>
    </source>
</reference>
<reference key="4">
    <citation type="journal article" date="2004" name="Nat. Genet.">
        <title>Complete sequencing and characterization of 21,243 full-length human cDNAs.</title>
        <authorList>
            <person name="Ota T."/>
            <person name="Suzuki Y."/>
            <person name="Nishikawa T."/>
            <person name="Otsuki T."/>
            <person name="Sugiyama T."/>
            <person name="Irie R."/>
            <person name="Wakamatsu A."/>
            <person name="Hayashi K."/>
            <person name="Sato H."/>
            <person name="Nagai K."/>
            <person name="Kimura K."/>
            <person name="Makita H."/>
            <person name="Sekine M."/>
            <person name="Obayashi M."/>
            <person name="Nishi T."/>
            <person name="Shibahara T."/>
            <person name="Tanaka T."/>
            <person name="Ishii S."/>
            <person name="Yamamoto J."/>
            <person name="Saito K."/>
            <person name="Kawai Y."/>
            <person name="Isono Y."/>
            <person name="Nakamura Y."/>
            <person name="Nagahari K."/>
            <person name="Murakami K."/>
            <person name="Yasuda T."/>
            <person name="Iwayanagi T."/>
            <person name="Wagatsuma M."/>
            <person name="Shiratori A."/>
            <person name="Sudo H."/>
            <person name="Hosoiri T."/>
            <person name="Kaku Y."/>
            <person name="Kodaira H."/>
            <person name="Kondo H."/>
            <person name="Sugawara M."/>
            <person name="Takahashi M."/>
            <person name="Kanda K."/>
            <person name="Yokoi T."/>
            <person name="Furuya T."/>
            <person name="Kikkawa E."/>
            <person name="Omura Y."/>
            <person name="Abe K."/>
            <person name="Kamihara K."/>
            <person name="Katsuta N."/>
            <person name="Sato K."/>
            <person name="Tanikawa M."/>
            <person name="Yamazaki M."/>
            <person name="Ninomiya K."/>
            <person name="Ishibashi T."/>
            <person name="Yamashita H."/>
            <person name="Murakawa K."/>
            <person name="Fujimori K."/>
            <person name="Tanai H."/>
            <person name="Kimata M."/>
            <person name="Watanabe M."/>
            <person name="Hiraoka S."/>
            <person name="Chiba Y."/>
            <person name="Ishida S."/>
            <person name="Ono Y."/>
            <person name="Takiguchi S."/>
            <person name="Watanabe S."/>
            <person name="Yosida M."/>
            <person name="Hotuta T."/>
            <person name="Kusano J."/>
            <person name="Kanehori K."/>
            <person name="Takahashi-Fujii A."/>
            <person name="Hara H."/>
            <person name="Tanase T.-O."/>
            <person name="Nomura Y."/>
            <person name="Togiya S."/>
            <person name="Komai F."/>
            <person name="Hara R."/>
            <person name="Takeuchi K."/>
            <person name="Arita M."/>
            <person name="Imose N."/>
            <person name="Musashino K."/>
            <person name="Yuuki H."/>
            <person name="Oshima A."/>
            <person name="Sasaki N."/>
            <person name="Aotsuka S."/>
            <person name="Yoshikawa Y."/>
            <person name="Matsunawa H."/>
            <person name="Ichihara T."/>
            <person name="Shiohata N."/>
            <person name="Sano S."/>
            <person name="Moriya S."/>
            <person name="Momiyama H."/>
            <person name="Satoh N."/>
            <person name="Takami S."/>
            <person name="Terashima Y."/>
            <person name="Suzuki O."/>
            <person name="Nakagawa S."/>
            <person name="Senoh A."/>
            <person name="Mizoguchi H."/>
            <person name="Goto Y."/>
            <person name="Shimizu F."/>
            <person name="Wakebe H."/>
            <person name="Hishigaki H."/>
            <person name="Watanabe T."/>
            <person name="Sugiyama A."/>
            <person name="Takemoto M."/>
            <person name="Kawakami B."/>
            <person name="Yamazaki M."/>
            <person name="Watanabe K."/>
            <person name="Kumagai A."/>
            <person name="Itakura S."/>
            <person name="Fukuzumi Y."/>
            <person name="Fujimori Y."/>
            <person name="Komiyama M."/>
            <person name="Tashiro H."/>
            <person name="Tanigami A."/>
            <person name="Fujiwara T."/>
            <person name="Ono T."/>
            <person name="Yamada K."/>
            <person name="Fujii Y."/>
            <person name="Ozaki K."/>
            <person name="Hirao M."/>
            <person name="Ohmori Y."/>
            <person name="Kawabata A."/>
            <person name="Hikiji T."/>
            <person name="Kobatake N."/>
            <person name="Inagaki H."/>
            <person name="Ikema Y."/>
            <person name="Okamoto S."/>
            <person name="Okitani R."/>
            <person name="Kawakami T."/>
            <person name="Noguchi S."/>
            <person name="Itoh T."/>
            <person name="Shigeta K."/>
            <person name="Senba T."/>
            <person name="Matsumura K."/>
            <person name="Nakajima Y."/>
            <person name="Mizuno T."/>
            <person name="Morinaga M."/>
            <person name="Sasaki M."/>
            <person name="Togashi T."/>
            <person name="Oyama M."/>
            <person name="Hata H."/>
            <person name="Watanabe M."/>
            <person name="Komatsu T."/>
            <person name="Mizushima-Sugano J."/>
            <person name="Satoh T."/>
            <person name="Shirai Y."/>
            <person name="Takahashi Y."/>
            <person name="Nakagawa K."/>
            <person name="Okumura K."/>
            <person name="Nagase T."/>
            <person name="Nomura N."/>
            <person name="Kikuchi H."/>
            <person name="Masuho Y."/>
            <person name="Yamashita R."/>
            <person name="Nakai K."/>
            <person name="Yada T."/>
            <person name="Nakamura Y."/>
            <person name="Ohara O."/>
            <person name="Isogai T."/>
            <person name="Sugano S."/>
        </authorList>
    </citation>
    <scope>NUCLEOTIDE SEQUENCE [LARGE SCALE MRNA] (ISOFORMS 1; 2 AND 3)</scope>
    <source>
        <tissue>Hippocampus</tissue>
        <tissue>Tongue</tissue>
    </source>
</reference>
<reference key="5">
    <citation type="journal article" date="2004" name="Nature">
        <title>The sequence and analysis of duplication-rich human chromosome 16.</title>
        <authorList>
            <person name="Martin J."/>
            <person name="Han C."/>
            <person name="Gordon L.A."/>
            <person name="Terry A."/>
            <person name="Prabhakar S."/>
            <person name="She X."/>
            <person name="Xie G."/>
            <person name="Hellsten U."/>
            <person name="Chan Y.M."/>
            <person name="Altherr M."/>
            <person name="Couronne O."/>
            <person name="Aerts A."/>
            <person name="Bajorek E."/>
            <person name="Black S."/>
            <person name="Blumer H."/>
            <person name="Branscomb E."/>
            <person name="Brown N.C."/>
            <person name="Bruno W.J."/>
            <person name="Buckingham J.M."/>
            <person name="Callen D.F."/>
            <person name="Campbell C.S."/>
            <person name="Campbell M.L."/>
            <person name="Campbell E.W."/>
            <person name="Caoile C."/>
            <person name="Challacombe J.F."/>
            <person name="Chasteen L.A."/>
            <person name="Chertkov O."/>
            <person name="Chi H.C."/>
            <person name="Christensen M."/>
            <person name="Clark L.M."/>
            <person name="Cohn J.D."/>
            <person name="Denys M."/>
            <person name="Detter J.C."/>
            <person name="Dickson M."/>
            <person name="Dimitrijevic-Bussod M."/>
            <person name="Escobar J."/>
            <person name="Fawcett J.J."/>
            <person name="Flowers D."/>
            <person name="Fotopulos D."/>
            <person name="Glavina T."/>
            <person name="Gomez M."/>
            <person name="Gonzales E."/>
            <person name="Goodstein D."/>
            <person name="Goodwin L.A."/>
            <person name="Grady D.L."/>
            <person name="Grigoriev I."/>
            <person name="Groza M."/>
            <person name="Hammon N."/>
            <person name="Hawkins T."/>
            <person name="Haydu L."/>
            <person name="Hildebrand C.E."/>
            <person name="Huang W."/>
            <person name="Israni S."/>
            <person name="Jett J."/>
            <person name="Jewett P.B."/>
            <person name="Kadner K."/>
            <person name="Kimball H."/>
            <person name="Kobayashi A."/>
            <person name="Krawczyk M.-C."/>
            <person name="Leyba T."/>
            <person name="Longmire J.L."/>
            <person name="Lopez F."/>
            <person name="Lou Y."/>
            <person name="Lowry S."/>
            <person name="Ludeman T."/>
            <person name="Manohar C.F."/>
            <person name="Mark G.A."/>
            <person name="McMurray K.L."/>
            <person name="Meincke L.J."/>
            <person name="Morgan J."/>
            <person name="Moyzis R.K."/>
            <person name="Mundt M.O."/>
            <person name="Munk A.C."/>
            <person name="Nandkeshwar R.D."/>
            <person name="Pitluck S."/>
            <person name="Pollard M."/>
            <person name="Predki P."/>
            <person name="Parson-Quintana B."/>
            <person name="Ramirez L."/>
            <person name="Rash S."/>
            <person name="Retterer J."/>
            <person name="Ricke D.O."/>
            <person name="Robinson D.L."/>
            <person name="Rodriguez A."/>
            <person name="Salamov A."/>
            <person name="Saunders E.H."/>
            <person name="Scott D."/>
            <person name="Shough T."/>
            <person name="Stallings R.L."/>
            <person name="Stalvey M."/>
            <person name="Sutherland R.D."/>
            <person name="Tapia R."/>
            <person name="Tesmer J.G."/>
            <person name="Thayer N."/>
            <person name="Thompson L.S."/>
            <person name="Tice H."/>
            <person name="Torney D.C."/>
            <person name="Tran-Gyamfi M."/>
            <person name="Tsai M."/>
            <person name="Ulanovsky L.E."/>
            <person name="Ustaszewska A."/>
            <person name="Vo N."/>
            <person name="White P.S."/>
            <person name="Williams A.L."/>
            <person name="Wills P.L."/>
            <person name="Wu J.-R."/>
            <person name="Wu K."/>
            <person name="Yang J."/>
            <person name="DeJong P."/>
            <person name="Bruce D."/>
            <person name="Doggett N.A."/>
            <person name="Deaven L."/>
            <person name="Schmutz J."/>
            <person name="Grimwood J."/>
            <person name="Richardson P."/>
            <person name="Rokhsar D.S."/>
            <person name="Eichler E.E."/>
            <person name="Gilna P."/>
            <person name="Lucas S.M."/>
            <person name="Myers R.M."/>
            <person name="Rubin E.M."/>
            <person name="Pennacchio L.A."/>
        </authorList>
    </citation>
    <scope>NUCLEOTIDE SEQUENCE [LARGE SCALE GENOMIC DNA]</scope>
</reference>
<reference key="6">
    <citation type="submission" date="2005-09" db="EMBL/GenBank/DDBJ databases">
        <authorList>
            <person name="Mural R.J."/>
            <person name="Istrail S."/>
            <person name="Sutton G.G."/>
            <person name="Florea L."/>
            <person name="Halpern A.L."/>
            <person name="Mobarry C.M."/>
            <person name="Lippert R."/>
            <person name="Walenz B."/>
            <person name="Shatkay H."/>
            <person name="Dew I."/>
            <person name="Miller J.R."/>
            <person name="Flanigan M.J."/>
            <person name="Edwards N.J."/>
            <person name="Bolanos R."/>
            <person name="Fasulo D."/>
            <person name="Halldorsson B.V."/>
            <person name="Hannenhalli S."/>
            <person name="Turner R."/>
            <person name="Yooseph S."/>
            <person name="Lu F."/>
            <person name="Nusskern D.R."/>
            <person name="Shue B.C."/>
            <person name="Zheng X.H."/>
            <person name="Zhong F."/>
            <person name="Delcher A.L."/>
            <person name="Huson D.H."/>
            <person name="Kravitz S.A."/>
            <person name="Mouchard L."/>
            <person name="Reinert K."/>
            <person name="Remington K.A."/>
            <person name="Clark A.G."/>
            <person name="Waterman M.S."/>
            <person name="Eichler E.E."/>
            <person name="Adams M.D."/>
            <person name="Hunkapiller M.W."/>
            <person name="Myers E.W."/>
            <person name="Venter J.C."/>
        </authorList>
    </citation>
    <scope>NUCLEOTIDE SEQUENCE [LARGE SCALE GENOMIC DNA]</scope>
</reference>
<reference key="7">
    <citation type="journal article" date="2004" name="Genome Res.">
        <title>The status, quality, and expansion of the NIH full-length cDNA project: the Mammalian Gene Collection (MGC).</title>
        <authorList>
            <consortium name="The MGC Project Team"/>
        </authorList>
    </citation>
    <scope>NUCLEOTIDE SEQUENCE [LARGE SCALE MRNA] (ISOFORM 1)</scope>
    <source>
        <tissue>Muscle</tissue>
        <tissue>Skin</tissue>
    </source>
</reference>
<reference key="8">
    <citation type="submission" date="2000-03" db="EMBL/GenBank/DDBJ databases">
        <title>Direct interaction of LDC2, a SR-related protein with pinin.</title>
        <authorList>
            <person name="Lee D.-C."/>
            <person name="Ouyang P."/>
        </authorList>
    </citation>
    <scope>NUCLEOTIDE SEQUENCE [MRNA] OF 78-305</scope>
    <source>
        <tissue>Kidney</tissue>
    </source>
</reference>
<reference key="9">
    <citation type="journal article" date="1999" name="EMBO J.">
        <title>Purification and characterization of human RNPS1: a general activator of pre-mRNA splicing.</title>
        <authorList>
            <person name="Mayeda A."/>
            <person name="Badolato J."/>
            <person name="Kobayashi R."/>
            <person name="Zhang M.Q."/>
            <person name="Gardiner E.M."/>
            <person name="Krainer A.R."/>
        </authorList>
    </citation>
    <scope>FUNCTION IN PRE-MRNA SPLICING</scope>
    <scope>ASSOCIATION WITH THE SPLICEOSOME</scope>
    <scope>SUBCELLULAR LOCATION</scope>
</reference>
<reference key="10">
    <citation type="journal article" date="2000" name="EMBO J.">
        <title>The spliceosome deposits multiple proteins 20-24 nucleotides upstream of mRNA exon-exon junctions.</title>
        <authorList>
            <person name="Le Hir H."/>
            <person name="Izaurralde E."/>
            <person name="Maquat L.E."/>
            <person name="Moore M.J."/>
        </authorList>
    </citation>
    <scope>IDENTIFICATION IN A MRNA SPLICING-DEPENDENT EXON JUNCTION COMPLEX (EJC) WITH DEK; RBM8A; SRRM1 AND ALYREF/THOC4</scope>
</reference>
<reference key="11">
    <citation type="journal article" date="2001" name="Int. J. Cancer">
        <title>Binding of a SART3 tumor-rejection antigen to a pre-mRNA splicing factor RNPS1: a possible regulation of splicing by a complex formation.</title>
        <authorList>
            <person name="Harada K."/>
            <person name="Yamada A."/>
            <person name="Yang D."/>
            <person name="Itoh K."/>
            <person name="Shichijo S."/>
        </authorList>
    </citation>
    <scope>INTERACTION WITH SART3</scope>
    <scope>SUBCELLULAR LOCATION</scope>
</reference>
<reference key="12">
    <citation type="journal article" date="2001" name="Science">
        <title>Communication of the position of exon-exon junctions to the mRNA surveillance machinery by the protein RNPS1.</title>
        <authorList>
            <person name="Lykke-Andersen J."/>
            <person name="Shu M.-D."/>
            <person name="Steitz J.A."/>
        </authorList>
    </citation>
    <scope>FUNCTION IN NONSENSE-MEDIATED MRNA DECAY</scope>
    <scope>IDENTIFICATION IN A POST-SPLICING COMPLEX WITH NXF1; RBM8A; UPF1; UPF2; UPF3A AND UPF3B</scope>
    <scope>RNA-BINDING</scope>
    <scope>SUBCELLULAR LOCATION</scope>
</reference>
<reference key="13">
    <citation type="journal article" date="2003" name="J. Biol. Chem.">
        <title>An evolutionarily conserved role for SRm160 in 3'-end processing that functions independently of exon junction complex formation.</title>
        <authorList>
            <person name="McCracken S."/>
            <person name="Longman D."/>
            <person name="Johnstone I.L."/>
            <person name="Caceres J.F."/>
            <person name="Blencowe B.J."/>
        </authorList>
    </citation>
    <scope>FUNCTION IN MRNA 3'-END FORMATION</scope>
    <scope>INTERACTION WITH SRRM1</scope>
</reference>
<reference key="14">
    <citation type="journal article" date="2003" name="Mol. Cell. Biol.">
        <title>Nuclear Pnn/DRS protein binds to spliced mRNPs and participates in mRNA processing and export via interaction with RNPS1.</title>
        <authorList>
            <person name="Li C."/>
            <person name="Lin R.-I."/>
            <person name="Lai M.-C."/>
            <person name="Ouyang P."/>
            <person name="Tarn W.-Y."/>
        </authorList>
    </citation>
    <scope>IDENTIFICATION IN A MRNP COMPLEX WITH PNN</scope>
    <scope>INTERACTION WITH PNN</scope>
    <scope>SUBCELLULAR LOCATION</scope>
</reference>
<reference key="15">
    <citation type="journal article" date="2003" name="Nature">
        <title>Proteomic characterization of the human centrosome by protein correlation profiling.</title>
        <authorList>
            <person name="Andersen J.S."/>
            <person name="Wilkinson C.J."/>
            <person name="Mayor T."/>
            <person name="Mortensen P."/>
            <person name="Nigg E.A."/>
            <person name="Mann M."/>
        </authorList>
    </citation>
    <scope>IDENTIFICATION BY MASS SPECTROMETRY</scope>
    <source>
        <tissue>Lymphoblast</tissue>
    </source>
</reference>
<reference key="16">
    <citation type="journal article" date="2004" name="Genes Dev.">
        <title>Splicing enhances translation in mammalian cells: an additional function of the exon junction complex.</title>
        <authorList>
            <person name="Nott A."/>
            <person name="Le Hir H."/>
            <person name="Moore M.J."/>
        </authorList>
    </citation>
    <scope>FUNCTION IN TRANSLATIONAL ACTIVITY AND NONSENSE-MEDIATED MRNA DECAY</scope>
    <scope>ASSOCIATION WITH POLYSOMES</scope>
</reference>
<reference key="17">
    <citation type="journal article" date="2004" name="J. Biol. Chem.">
        <title>A simple whole cell lysate system for in vitro splicing reveals a stepwise assembly of the exon-exon junction complex.</title>
        <authorList>
            <person name="Kataoka N."/>
            <person name="Dreyfuss G."/>
        </authorList>
    </citation>
    <scope>IDENTIFICATION IN A MRNA SPLICING-DEPENDENT EXON JUNCTION COMPLEX (EJC) WITH RBM8A AND SRRM1</scope>
</reference>
<reference key="18">
    <citation type="journal article" date="2004" name="Mol. Cell. Biol.">
        <title>Human RNPS1 and its associated factors: a versatile alternative pre-mRNA splicing regulator in vivo.</title>
        <authorList>
            <person name="Sakashita E."/>
            <person name="Tatsumi S."/>
            <person name="Werner D."/>
            <person name="Endo H."/>
            <person name="Mayeda A."/>
        </authorList>
    </citation>
    <scope>FUNCTION IN ALTERNATIVE PRE-MRNA SPLICING</scope>
    <scope>INTERACTION WITH PNN; SRP54 AND TRA2B</scope>
    <scope>MUTAGENESIS OF TYR-205 AND TYR-207</scope>
    <scope>SUBCELLULAR LOCATION</scope>
</reference>
<reference key="19">
    <citation type="journal article" date="2005" name="Mol. Cell. Biol.">
        <title>Activation of pre-mRNA splicing by human RNPS1 is regulated by CK2 phosphorylation.</title>
        <authorList>
            <person name="Trembley J.H."/>
            <person name="Tatsumi S."/>
            <person name="Sakashita E."/>
            <person name="Loyer P."/>
            <person name="Slaughter C.A."/>
            <person name="Suzuki H."/>
            <person name="Endo H."/>
            <person name="Kidd V.J."/>
            <person name="Mayeda A."/>
        </authorList>
    </citation>
    <scope>FUNCTION IN PRE-MRNA SPLICING</scope>
    <scope>ASSOCIATION WITH THE ACTIVE SPLICEOSOME</scope>
    <scope>PHOSPHORYLATION AT SER-53</scope>
    <scope>IDENTIFICATION BY MASS SPECTROMETRY</scope>
    <scope>INTERACTION WITH CSNK2A1</scope>
    <scope>MUTAGENESIS OF SER-53</scope>
    <scope>SUBCELLULAR LOCATION</scope>
</reference>
<reference key="20">
    <citation type="journal article" date="2005" name="Mol. Cell">
        <title>Exon-junction complex components specify distinct routes of nonsense-mediated mRNA decay with differential cofactor requirements.</title>
        <authorList>
            <person name="Gehring N.H."/>
            <person name="Kunz J.B."/>
            <person name="Neu-Yilik G."/>
            <person name="Breit S."/>
            <person name="Viegas M.H."/>
            <person name="Hentze M.W."/>
            <person name="Kulozik A.E."/>
        </authorList>
    </citation>
    <scope>FUNCTION IN A RENT2-DEPENDENT NONSENSE-MEDIATED MRNA DECAY</scope>
    <scope>IDENTIFICATION IN A COMPLEX WITH UPF2 AND UPF3B</scope>
</reference>
<reference key="21">
    <citation type="journal article" date="2003" name="Mol. Cell. Biol.">
        <title>ASAP, a novel protein complex involved in RNA processing and apoptosis.</title>
        <authorList>
            <person name="Schwerk C."/>
            <person name="Prasad J."/>
            <person name="Degenhardt K."/>
            <person name="Erdjument-Bromage H."/>
            <person name="White E."/>
            <person name="Tempst P."/>
            <person name="Kidd V.J."/>
            <person name="Manley J.L."/>
            <person name="Lahti J.M."/>
            <person name="Reinberg D."/>
        </authorList>
    </citation>
    <scope>IDENTIFICATION IN THE ASAP COMPLEX</scope>
    <scope>FUNCTION OF THE ASAP COMPLEX</scope>
</reference>
<reference key="22">
    <citation type="journal article" date="2005" name="Nat. Biotechnol.">
        <title>Immunoaffinity profiling of tyrosine phosphorylation in cancer cells.</title>
        <authorList>
            <person name="Rush J."/>
            <person name="Moritz A."/>
            <person name="Lee K.A."/>
            <person name="Guo A."/>
            <person name="Goss V.L."/>
            <person name="Spek E.J."/>
            <person name="Zhang H."/>
            <person name="Zha X.-M."/>
            <person name="Polakiewicz R.D."/>
            <person name="Comb M.J."/>
        </authorList>
    </citation>
    <scope>IDENTIFICATION BY MASS SPECTROMETRY [LARGE SCALE ANALYSIS]</scope>
</reference>
<reference key="23">
    <citation type="journal article" date="2005" name="RNA">
        <title>Biochemical analysis of the EJC reveals two new factors and a stable tetrameric protein core.</title>
        <authorList>
            <person name="Tange T.O."/>
            <person name="Shibuya T."/>
            <person name="Jurica M.S."/>
            <person name="Moore M.J."/>
        </authorList>
    </citation>
    <scope>IDENTIFICATION IN A MRNA SPLICING-DEPENDENT EXON JUNCTION COMPLEX</scope>
    <scope>IDENTIFICATION IN THE ASAP COMPLEX</scope>
    <scope>IDENTIFICATION BY MASS SPECTROMETRY</scope>
</reference>
<reference key="24">
    <citation type="journal article" date="2006" name="Cell">
        <title>Global, in vivo, and site-specific phosphorylation dynamics in signaling networks.</title>
        <authorList>
            <person name="Olsen J.V."/>
            <person name="Blagoev B."/>
            <person name="Gnad F."/>
            <person name="Macek B."/>
            <person name="Kumar C."/>
            <person name="Mortensen P."/>
            <person name="Mann M."/>
        </authorList>
    </citation>
    <scope>IDENTIFICATION BY MASS SPECTROMETRY [LARGE SCALE ANALYSIS]</scope>
    <source>
        <tissue>Cervix carcinoma</tissue>
    </source>
</reference>
<reference key="25">
    <citation type="journal article" date="2007" name="Nucleic Acids Res.">
        <title>The abundance of RNPS1, a protein component of the exon junction complex, can determine the variability in efficiency of the nonsense mediated decay pathway.</title>
        <authorList>
            <person name="Viegas M.H."/>
            <person name="Gehring N.H."/>
            <person name="Breit S."/>
            <person name="Hentze M.W."/>
            <person name="Kulozik A.E."/>
        </authorList>
    </citation>
    <scope>FUNCTION IN NONSENSE-MEDIATED MRNA DECAY (NMD)</scope>
</reference>
<reference key="26">
    <citation type="journal article" date="2009" name="RNA">
        <title>Assembly and mobility of exon-exon junction complexes in living cells.</title>
        <authorList>
            <person name="Schmidt U."/>
            <person name="Im K.-B."/>
            <person name="Benzing C."/>
            <person name="Janjetovic S."/>
            <person name="Rippe K."/>
            <person name="Lichter P."/>
            <person name="Wachsmuth M."/>
        </authorList>
    </citation>
    <scope>SUBCELLULAR LOCATION</scope>
</reference>
<reference key="27">
    <citation type="journal article" date="2009" name="Science">
        <title>Lysine acetylation targets protein complexes and co-regulates major cellular functions.</title>
        <authorList>
            <person name="Choudhary C."/>
            <person name="Kumar C."/>
            <person name="Gnad F."/>
            <person name="Nielsen M.L."/>
            <person name="Rehman M."/>
            <person name="Walther T.C."/>
            <person name="Olsen J.V."/>
            <person name="Mann M."/>
        </authorList>
    </citation>
    <scope>ACETYLATION [LARGE SCALE ANALYSIS] AT LYS-218</scope>
    <scope>IDENTIFICATION BY MASS SPECTROMETRY [LARGE SCALE ANALYSIS]</scope>
</reference>
<reference key="28">
    <citation type="journal article" date="2010" name="RNA">
        <title>Human SAP18 mediates assembly of a splicing regulatory multiprotein complex via its ubiquitin-like fold.</title>
        <authorList>
            <person name="Singh K.K."/>
            <person name="Erkelenz S."/>
            <person name="Rattay S."/>
            <person name="Dehof A.K."/>
            <person name="Hildebrandt A."/>
            <person name="Schulze-Osthoff K."/>
            <person name="Schaal H."/>
            <person name="Schwerk C."/>
        </authorList>
    </citation>
    <scope>INTERACTION WITH SAP18 AND ACIN1</scope>
</reference>
<reference key="29">
    <citation type="journal article" date="2011" name="BMC Syst. Biol.">
        <title>Initial characterization of the human central proteome.</title>
        <authorList>
            <person name="Burkard T.R."/>
            <person name="Planyavsky M."/>
            <person name="Kaupe I."/>
            <person name="Breitwieser F.P."/>
            <person name="Buerckstuemmer T."/>
            <person name="Bennett K.L."/>
            <person name="Superti-Furga G."/>
            <person name="Colinge J."/>
        </authorList>
    </citation>
    <scope>IDENTIFICATION BY MASS SPECTROMETRY [LARGE SCALE ANALYSIS]</scope>
</reference>
<reference key="30">
    <citation type="journal article" date="2011" name="Sci. Signal.">
        <title>System-wide temporal characterization of the proteome and phosphoproteome of human embryonic stem cell differentiation.</title>
        <authorList>
            <person name="Rigbolt K.T."/>
            <person name="Prokhorova T.A."/>
            <person name="Akimov V."/>
            <person name="Henningsen J."/>
            <person name="Johansen P.T."/>
            <person name="Kratchmarova I."/>
            <person name="Kassem M."/>
            <person name="Mann M."/>
            <person name="Olsen J.V."/>
            <person name="Blagoev B."/>
        </authorList>
    </citation>
    <scope>PHOSPHORYLATION [LARGE SCALE ANALYSIS] AT SER-155; SER-157 AND THR-161</scope>
    <scope>IDENTIFICATION BY MASS SPECTROMETRY [LARGE SCALE ANALYSIS]</scope>
</reference>
<reference key="31">
    <citation type="journal article" date="2012" name="Mol. Cell. Biol.">
        <title>Proteins associated with the exon junction complex also control the alternative splicing of apoptotic regulators.</title>
        <authorList>
            <person name="Michelle L."/>
            <person name="Cloutier A."/>
            <person name="Toutant J."/>
            <person name="Shkreta L."/>
            <person name="Thibault P."/>
            <person name="Durand M."/>
            <person name="Garneau D."/>
            <person name="Gendron D."/>
            <person name="Lapointe E."/>
            <person name="Couture S."/>
            <person name="Le Hir H."/>
            <person name="Klinck R."/>
            <person name="Elela S.A."/>
            <person name="Prinos P."/>
            <person name="Chabot B."/>
        </authorList>
    </citation>
    <scope>FUNCTION</scope>
</reference>
<reference key="32">
    <citation type="journal article" date="2017" name="Nat. Struct. Mol. Biol.">
        <title>Site-specific mapping of the human SUMO proteome reveals co-modification with phosphorylation.</title>
        <authorList>
            <person name="Hendriks I.A."/>
            <person name="Lyon D."/>
            <person name="Young C."/>
            <person name="Jensen L.J."/>
            <person name="Vertegaal A.C."/>
            <person name="Nielsen M.L."/>
        </authorList>
    </citation>
    <scope>SUMOYLATION [LARGE SCALE ANALYSIS] AT LYS-7 AND LYS-15</scope>
    <scope>IDENTIFICATION BY MASS SPECTROMETRY [LARGE SCALE ANALYSIS]</scope>
</reference>
<reference key="33">
    <citation type="journal article" date="2012" name="Nat. Struct. Mol. Biol.">
        <title>The structure of the ASAP core complex reveals the existence of a Pinin-containing PSAP complex.</title>
        <authorList>
            <person name="Murachelli A.G."/>
            <person name="Ebert J."/>
            <person name="Basquin C."/>
            <person name="Le Hir H."/>
            <person name="Conti E."/>
        </authorList>
    </citation>
    <scope>X-RAY CRYSTALLOGRAPHY (1.9 ANGSTROMS) OF THE ASAP COMPLEX</scope>
    <scope>IDENTIFICATION IN THE PSAP COMPLEX</scope>
    <scope>INTERACTION WITH SAP18</scope>
    <scope>MUTAGENESIS OF ASN-171</scope>
</reference>
<dbReference type="EMBL" id="L37368">
    <property type="protein sequence ID" value="AAA92859.1"/>
    <property type="molecule type" value="mRNA"/>
</dbReference>
<dbReference type="EMBL" id="AF015608">
    <property type="protein sequence ID" value="AAC39791.1"/>
    <property type="molecule type" value="mRNA"/>
</dbReference>
<dbReference type="EMBL" id="AF274003">
    <property type="protein sequence ID" value="AAL56665.1"/>
    <property type="molecule type" value="mRNA"/>
</dbReference>
<dbReference type="EMBL" id="AK289955">
    <property type="protein sequence ID" value="BAF82644.1"/>
    <property type="molecule type" value="mRNA"/>
</dbReference>
<dbReference type="EMBL" id="AK293343">
    <property type="protein sequence ID" value="BAG56859.1"/>
    <property type="molecule type" value="mRNA"/>
</dbReference>
<dbReference type="EMBL" id="AK303100">
    <property type="protein sequence ID" value="BAG64209.1"/>
    <property type="molecule type" value="mRNA"/>
</dbReference>
<dbReference type="EMBL" id="AK316132">
    <property type="protein sequence ID" value="BAH14503.1"/>
    <property type="molecule type" value="mRNA"/>
</dbReference>
<dbReference type="EMBL" id="AC009065">
    <property type="status" value="NOT_ANNOTATED_CDS"/>
    <property type="molecule type" value="Genomic_DNA"/>
</dbReference>
<dbReference type="EMBL" id="CH471112">
    <property type="protein sequence ID" value="EAW85516.1"/>
    <property type="molecule type" value="Genomic_DNA"/>
</dbReference>
<dbReference type="EMBL" id="BC001659">
    <property type="protein sequence ID" value="AAH01659.1"/>
    <property type="molecule type" value="mRNA"/>
</dbReference>
<dbReference type="EMBL" id="BC001838">
    <property type="protein sequence ID" value="AAH01838.1"/>
    <property type="molecule type" value="mRNA"/>
</dbReference>
<dbReference type="EMBL" id="BC108316">
    <property type="protein sequence ID" value="AAI08317.1"/>
    <property type="molecule type" value="mRNA"/>
</dbReference>
<dbReference type="EMBL" id="AF247662">
    <property type="protein sequence ID" value="AAF72519.1"/>
    <property type="molecule type" value="mRNA"/>
</dbReference>
<dbReference type="CCDS" id="CCDS10465.1">
    <molecule id="Q15287-1"/>
</dbReference>
<dbReference type="CCDS" id="CCDS66907.1">
    <molecule id="Q15287-2"/>
</dbReference>
<dbReference type="PIR" id="JC4525">
    <property type="entry name" value="JC4525"/>
</dbReference>
<dbReference type="RefSeq" id="NP_001273554.1">
    <molecule id="Q15287-1"/>
    <property type="nucleotide sequence ID" value="NM_001286625.1"/>
</dbReference>
<dbReference type="RefSeq" id="NP_001273555.1">
    <molecule id="Q15287-2"/>
    <property type="nucleotide sequence ID" value="NM_001286626.2"/>
</dbReference>
<dbReference type="RefSeq" id="NP_001273556.1">
    <property type="nucleotide sequence ID" value="NM_001286627.1"/>
</dbReference>
<dbReference type="RefSeq" id="NP_006702.1">
    <molecule id="Q15287-1"/>
    <property type="nucleotide sequence ID" value="NM_006711.5"/>
</dbReference>
<dbReference type="RefSeq" id="NP_542161.1">
    <molecule id="Q15287-1"/>
    <property type="nucleotide sequence ID" value="NM_080594.4"/>
</dbReference>
<dbReference type="RefSeq" id="XP_005255105.1">
    <molecule id="Q15287-1"/>
    <property type="nucleotide sequence ID" value="XM_005255048.3"/>
</dbReference>
<dbReference type="RefSeq" id="XP_005255106.1">
    <molecule id="Q15287-1"/>
    <property type="nucleotide sequence ID" value="XM_005255049.5"/>
</dbReference>
<dbReference type="RefSeq" id="XP_016878363.1">
    <property type="nucleotide sequence ID" value="XM_017022874.1"/>
</dbReference>
<dbReference type="RefSeq" id="XP_047289472.1">
    <molecule id="Q15287-1"/>
    <property type="nucleotide sequence ID" value="XM_047433516.1"/>
</dbReference>
<dbReference type="RefSeq" id="XP_054235386.1">
    <molecule id="Q15287-1"/>
    <property type="nucleotide sequence ID" value="XM_054379411.1"/>
</dbReference>
<dbReference type="RefSeq" id="XP_054235387.1">
    <molecule id="Q15287-1"/>
    <property type="nucleotide sequence ID" value="XM_054379412.1"/>
</dbReference>
<dbReference type="RefSeq" id="XP_054235388.1">
    <molecule id="Q15287-1"/>
    <property type="nucleotide sequence ID" value="XM_054379413.1"/>
</dbReference>
<dbReference type="PDB" id="4A8X">
    <property type="method" value="X-ray"/>
    <property type="resolution" value="1.90 A"/>
    <property type="chains" value="A=159-244"/>
</dbReference>
<dbReference type="PDBsum" id="4A8X"/>
<dbReference type="SMR" id="Q15287"/>
<dbReference type="BioGRID" id="116125">
    <property type="interactions" value="439"/>
</dbReference>
<dbReference type="ComplexPortal" id="CPX-2256">
    <property type="entry name" value="ASAP splicing-associated complex"/>
</dbReference>
<dbReference type="ComplexPortal" id="CPX-2257">
    <property type="entry name" value="PSAP splicing-associated complex"/>
</dbReference>
<dbReference type="CORUM" id="Q15287"/>
<dbReference type="DIP" id="DIP-32943N"/>
<dbReference type="FunCoup" id="Q15287">
    <property type="interactions" value="3566"/>
</dbReference>
<dbReference type="IntAct" id="Q15287">
    <property type="interactions" value="278"/>
</dbReference>
<dbReference type="MINT" id="Q15287"/>
<dbReference type="STRING" id="9606.ENSP00000457723"/>
<dbReference type="TCDB" id="3.A.18.1.1">
    <property type="family name" value="the nuclear mrna exporter (mrna-e) family"/>
</dbReference>
<dbReference type="GlyGen" id="Q15287">
    <property type="glycosylation" value="2 sites, 1 O-linked glycan (2 sites)"/>
</dbReference>
<dbReference type="iPTMnet" id="Q15287"/>
<dbReference type="PhosphoSitePlus" id="Q15287"/>
<dbReference type="SwissPalm" id="Q15287"/>
<dbReference type="BioMuta" id="RNPS1"/>
<dbReference type="DMDM" id="74754492"/>
<dbReference type="jPOST" id="Q15287"/>
<dbReference type="MassIVE" id="Q15287"/>
<dbReference type="PaxDb" id="9606-ENSP00000457723"/>
<dbReference type="PeptideAtlas" id="Q15287"/>
<dbReference type="ProteomicsDB" id="60514">
    <molecule id="Q15287-1"/>
</dbReference>
<dbReference type="ProteomicsDB" id="60515">
    <molecule id="Q15287-2"/>
</dbReference>
<dbReference type="ProteomicsDB" id="60516">
    <molecule id="Q15287-3"/>
</dbReference>
<dbReference type="Pumba" id="Q15287"/>
<dbReference type="Antibodypedia" id="23681">
    <property type="antibodies" value="72 antibodies from 20 providers"/>
</dbReference>
<dbReference type="DNASU" id="10921"/>
<dbReference type="Ensembl" id="ENST00000301730.12">
    <molecule id="Q15287-1"/>
    <property type="protein sequence ID" value="ENSP00000301730.8"/>
    <property type="gene ID" value="ENSG00000205937.12"/>
</dbReference>
<dbReference type="Ensembl" id="ENST00000320225.10">
    <molecule id="Q15287-1"/>
    <property type="protein sequence ID" value="ENSP00000315859.5"/>
    <property type="gene ID" value="ENSG00000205937.12"/>
</dbReference>
<dbReference type="Ensembl" id="ENST00000397086.6">
    <molecule id="Q15287-1"/>
    <property type="protein sequence ID" value="ENSP00000380275.2"/>
    <property type="gene ID" value="ENSG00000205937.12"/>
</dbReference>
<dbReference type="Ensembl" id="ENST00000565678.5">
    <molecule id="Q15287-1"/>
    <property type="protein sequence ID" value="ENSP00000457723.1"/>
    <property type="gene ID" value="ENSG00000205937.12"/>
</dbReference>
<dbReference type="Ensembl" id="ENST00000566458.5">
    <molecule id="Q15287-2"/>
    <property type="protein sequence ID" value="ENSP00000456352.1"/>
    <property type="gene ID" value="ENSG00000205937.12"/>
</dbReference>
<dbReference type="Ensembl" id="ENST00000568631.5">
    <molecule id="Q15287-1"/>
    <property type="protein sequence ID" value="ENSP00000457820.1"/>
    <property type="gene ID" value="ENSG00000205937.12"/>
</dbReference>
<dbReference type="GeneID" id="10921"/>
<dbReference type="KEGG" id="hsa:10921"/>
<dbReference type="MANE-Select" id="ENST00000320225.10">
    <property type="protein sequence ID" value="ENSP00000315859.5"/>
    <property type="RefSeq nucleotide sequence ID" value="NM_080594.4"/>
    <property type="RefSeq protein sequence ID" value="NP_542161.1"/>
</dbReference>
<dbReference type="UCSC" id="uc002cpt.5">
    <molecule id="Q15287-1"/>
    <property type="organism name" value="human"/>
</dbReference>
<dbReference type="AGR" id="HGNC:10080"/>
<dbReference type="CTD" id="10921"/>
<dbReference type="DisGeNET" id="10921"/>
<dbReference type="GeneCards" id="RNPS1"/>
<dbReference type="HGNC" id="HGNC:10080">
    <property type="gene designation" value="RNPS1"/>
</dbReference>
<dbReference type="HPA" id="ENSG00000205937">
    <property type="expression patterns" value="Low tissue specificity"/>
</dbReference>
<dbReference type="MIM" id="606447">
    <property type="type" value="gene"/>
</dbReference>
<dbReference type="neXtProt" id="NX_Q15287"/>
<dbReference type="OpenTargets" id="ENSG00000205937"/>
<dbReference type="PharmGKB" id="PA34453"/>
<dbReference type="VEuPathDB" id="HostDB:ENSG00000205937"/>
<dbReference type="eggNOG" id="KOG4209">
    <property type="taxonomic scope" value="Eukaryota"/>
</dbReference>
<dbReference type="GeneTree" id="ENSGT00730000111029"/>
<dbReference type="InParanoid" id="Q15287"/>
<dbReference type="OMA" id="EFPVDRY"/>
<dbReference type="OrthoDB" id="252020at2759"/>
<dbReference type="PAN-GO" id="Q15287">
    <property type="GO annotations" value="4 GO annotations based on evolutionary models"/>
</dbReference>
<dbReference type="PhylomeDB" id="Q15287"/>
<dbReference type="TreeFam" id="TF314165"/>
<dbReference type="PathwayCommons" id="Q15287"/>
<dbReference type="Reactome" id="R-HSA-159236">
    <property type="pathway name" value="Transport of Mature mRNA derived from an Intron-Containing Transcript"/>
</dbReference>
<dbReference type="Reactome" id="R-HSA-72163">
    <property type="pathway name" value="mRNA Splicing - Major Pathway"/>
</dbReference>
<dbReference type="Reactome" id="R-HSA-72187">
    <property type="pathway name" value="mRNA 3'-end processing"/>
</dbReference>
<dbReference type="Reactome" id="R-HSA-73856">
    <property type="pathway name" value="RNA Polymerase II Transcription Termination"/>
</dbReference>
<dbReference type="Reactome" id="R-HSA-9010553">
    <property type="pathway name" value="Regulation of expression of SLITs and ROBOs"/>
</dbReference>
<dbReference type="Reactome" id="R-HSA-975957">
    <property type="pathway name" value="Nonsense Mediated Decay (NMD) enhanced by the Exon Junction Complex (EJC)"/>
</dbReference>
<dbReference type="SignaLink" id="Q15287"/>
<dbReference type="BioGRID-ORCS" id="10921">
    <property type="hits" value="743 hits in 1153 CRISPR screens"/>
</dbReference>
<dbReference type="CD-CODE" id="804901D1">
    <property type="entry name" value="Nuclear speckle"/>
</dbReference>
<dbReference type="ChiTaRS" id="RNPS1">
    <property type="organism name" value="human"/>
</dbReference>
<dbReference type="EvolutionaryTrace" id="Q15287"/>
<dbReference type="GeneWiki" id="RNPS1"/>
<dbReference type="GenomeRNAi" id="10921"/>
<dbReference type="Pharos" id="Q15287">
    <property type="development level" value="Tbio"/>
</dbReference>
<dbReference type="PRO" id="PR:Q15287"/>
<dbReference type="Proteomes" id="UP000005640">
    <property type="component" value="Chromosome 16"/>
</dbReference>
<dbReference type="RNAct" id="Q15287">
    <property type="molecule type" value="protein"/>
</dbReference>
<dbReference type="Bgee" id="ENSG00000205937">
    <property type="expression patterns" value="Expressed in primordial germ cell in gonad and 173 other cell types or tissues"/>
</dbReference>
<dbReference type="ExpressionAtlas" id="Q15287">
    <property type="expression patterns" value="baseline and differential"/>
</dbReference>
<dbReference type="GO" id="GO:0061574">
    <property type="term" value="C:ASAP complex"/>
    <property type="evidence" value="ECO:0000314"/>
    <property type="project" value="UniProtKB"/>
</dbReference>
<dbReference type="GO" id="GO:0005737">
    <property type="term" value="C:cytoplasm"/>
    <property type="evidence" value="ECO:0000314"/>
    <property type="project" value="UniProtKB"/>
</dbReference>
<dbReference type="GO" id="GO:0005829">
    <property type="term" value="C:cytosol"/>
    <property type="evidence" value="ECO:0000304"/>
    <property type="project" value="Reactome"/>
</dbReference>
<dbReference type="GO" id="GO:0016607">
    <property type="term" value="C:nuclear speck"/>
    <property type="evidence" value="ECO:0007669"/>
    <property type="project" value="UniProtKB-SubCell"/>
</dbReference>
<dbReference type="GO" id="GO:0005654">
    <property type="term" value="C:nucleoplasm"/>
    <property type="evidence" value="ECO:0000314"/>
    <property type="project" value="HPA"/>
</dbReference>
<dbReference type="GO" id="GO:0005634">
    <property type="term" value="C:nucleus"/>
    <property type="evidence" value="ECO:0000314"/>
    <property type="project" value="UniProtKB"/>
</dbReference>
<dbReference type="GO" id="GO:0003730">
    <property type="term" value="F:mRNA 3'-UTR binding"/>
    <property type="evidence" value="ECO:0000314"/>
    <property type="project" value="UniProtKB"/>
</dbReference>
<dbReference type="GO" id="GO:0003723">
    <property type="term" value="F:RNA binding"/>
    <property type="evidence" value="ECO:0007005"/>
    <property type="project" value="UniProtKB"/>
</dbReference>
<dbReference type="GO" id="GO:0006351">
    <property type="term" value="P:DNA-templated transcription"/>
    <property type="evidence" value="ECO:0000304"/>
    <property type="project" value="ProtInc"/>
</dbReference>
<dbReference type="GO" id="GO:0000398">
    <property type="term" value="P:mRNA splicing, via spliceosome"/>
    <property type="evidence" value="ECO:0000318"/>
    <property type="project" value="GO_Central"/>
</dbReference>
<dbReference type="GO" id="GO:0048025">
    <property type="term" value="P:negative regulation of mRNA splicing, via spliceosome"/>
    <property type="evidence" value="ECO:0000314"/>
    <property type="project" value="UniProtKB"/>
</dbReference>
<dbReference type="GO" id="GO:0000184">
    <property type="term" value="P:nuclear-transcribed mRNA catabolic process, nonsense-mediated decay"/>
    <property type="evidence" value="ECO:0000314"/>
    <property type="project" value="UniProtKB"/>
</dbReference>
<dbReference type="GO" id="GO:0043065">
    <property type="term" value="P:positive regulation of apoptotic process"/>
    <property type="evidence" value="ECO:0000314"/>
    <property type="project" value="UniProtKB"/>
</dbReference>
<dbReference type="GO" id="GO:0000381">
    <property type="term" value="P:regulation of alternative mRNA splicing, via spliceosome"/>
    <property type="evidence" value="ECO:0000315"/>
    <property type="project" value="UniProtKB"/>
</dbReference>
<dbReference type="GO" id="GO:0008380">
    <property type="term" value="P:RNA splicing"/>
    <property type="evidence" value="ECO:0000304"/>
    <property type="project" value="ProtInc"/>
</dbReference>
<dbReference type="CDD" id="cd12365">
    <property type="entry name" value="RRM_RNPS1"/>
    <property type="match status" value="1"/>
</dbReference>
<dbReference type="Gene3D" id="3.30.70.330">
    <property type="match status" value="1"/>
</dbReference>
<dbReference type="InterPro" id="IPR012677">
    <property type="entry name" value="Nucleotide-bd_a/b_plait_sf"/>
</dbReference>
<dbReference type="InterPro" id="IPR035979">
    <property type="entry name" value="RBD_domain_sf"/>
</dbReference>
<dbReference type="InterPro" id="IPR034201">
    <property type="entry name" value="RNPS1_RRM"/>
</dbReference>
<dbReference type="InterPro" id="IPR000504">
    <property type="entry name" value="RRM_dom"/>
</dbReference>
<dbReference type="PANTHER" id="PTHR15481">
    <property type="entry name" value="RIBONUCLEIC ACID BINDING PROTEIN S1"/>
    <property type="match status" value="1"/>
</dbReference>
<dbReference type="PANTHER" id="PTHR15481:SF2">
    <property type="entry name" value="RNA-BINDING PROTEIN WITH SERINE-RICH DOMAIN 1"/>
    <property type="match status" value="1"/>
</dbReference>
<dbReference type="Pfam" id="PF00076">
    <property type="entry name" value="RRM_1"/>
    <property type="match status" value="1"/>
</dbReference>
<dbReference type="SMART" id="SM00360">
    <property type="entry name" value="RRM"/>
    <property type="match status" value="1"/>
</dbReference>
<dbReference type="SUPFAM" id="SSF54928">
    <property type="entry name" value="RNA-binding domain, RBD"/>
    <property type="match status" value="1"/>
</dbReference>
<dbReference type="PROSITE" id="PS50102">
    <property type="entry name" value="RRM"/>
    <property type="match status" value="1"/>
</dbReference>
<name>RNPS1_HUMAN</name>
<comment type="function">
    <text evidence="3 6 7 8 11 12 13 14 16 18">Part of pre- and post-splicing multiprotein mRNP complexes. Auxiliary component of the splicing-dependent multiprotein exon junction complex (EJC) deposited at splice junction on mRNAs. The EJC is a dynamic structure consisting of core proteins and several peripheral nuclear and cytoplasmic associated factors that join the complex only transiently either during EJC assembly or during subsequent mRNA metabolism. Component of the ASAP and PSAP complexes which bind RNA in a sequence-independent manner and are proposed to be recruited to the EJC prior to or during the splicing process and to regulate specific excision of introns in specific transcription subsets. The ASAP complex can inhibit RNA processing during in vitro splicing reactions. The ASAP complex promotes apoptosis and is disassembled after induction of apoptosis. Enhances the formation of the ATP-dependent A complex of the spliceosome. Involved in both constitutive splicing and, in association with SRP54 and TRA2B/SFRS10, in distinctive modulation of alternative splicing in a substrate-dependent manner. Involved in the splicing modulation of BCL2L1/Bcl-X (and probably other apoptotic genes); specifically inhibits formation of proapoptotic isoforms such as Bcl-X(S); the activity is different from the established EJC assembly and function. Participates in mRNA 3'-end cleavage. Involved in UPF2-dependent nonsense-mediated decay (NMD) of mRNAs containing premature stop codons. Also mediates increase of mRNA abundance and translational efficiency. Binds spliced mRNA 20-25 nt upstream of exon-exon junctions.</text>
</comment>
<comment type="subunit">
    <text evidence="4 5 6 7 8 9 10 11 13 14 15 17 19 21">Found in mRNA splicing-dependent exon junction complexes (EJC). Found in a post-splicing complex with NXF1, RBM8A, UPF1, UPF2, UPF3A, UPF3B and RNPS1. Component of the heterotrimeric ASAP (apoptosis- and splicing-associated protein) and PSAP complexes consisting of RNPS1, SAP18 and either ACIN1 or PNN, respectively; the ASAP and PSAP complexes probably are formed mutually exclusive. Component of the active spliceosome. Associates with polysomes. Interacts with the cleaved p110 isoform of CDC2L1, CSNK2A1, PNN, SART3, SRP54, SRRM1 and TRA2B/SFRS10.</text>
</comment>
<comment type="interaction">
    <interactant intactId="EBI-395959">
        <id>Q15287</id>
    </interactant>
    <interactant intactId="EBI-11096309">
        <id>Q9NYB9-2</id>
        <label>ABI2</label>
    </interactant>
    <organismsDiffer>false</organismsDiffer>
    <experiments>3</experiments>
</comment>
<comment type="interaction">
    <interactant intactId="EBI-395959">
        <id>Q15287</id>
    </interactant>
    <interactant intactId="EBI-396258">
        <id>Q9UKV3</id>
        <label>ACIN1</label>
    </interactant>
    <organismsDiffer>false</organismsDiffer>
    <experiments>3</experiments>
</comment>
<comment type="interaction">
    <interactant intactId="EBI-395959">
        <id>Q15287</id>
    </interactant>
    <interactant intactId="EBI-2836773">
        <id>Q9UK58</id>
        <label>CCNL1</label>
    </interactant>
    <organismsDiffer>false</organismsDiffer>
    <experiments>4</experiments>
</comment>
<comment type="interaction">
    <interactant intactId="EBI-395959">
        <id>Q15287</id>
    </interactant>
    <interactant intactId="EBI-750020">
        <id>P49760</id>
        <label>CLK2</label>
    </interactant>
    <organismsDiffer>false</organismsDiffer>
    <experiments>5</experiments>
</comment>
<comment type="interaction">
    <interactant intactId="EBI-395959">
        <id>Q15287</id>
    </interactant>
    <interactant intactId="EBI-745579">
        <id>P49761</id>
        <label>CLK3</label>
    </interactant>
    <organismsDiffer>false</organismsDiffer>
    <experiments>5</experiments>
</comment>
<comment type="interaction">
    <interactant intactId="EBI-395959">
        <id>Q15287</id>
    </interactant>
    <interactant intactId="EBI-741705">
        <id>Q8IYF1</id>
        <label>ELOA2</label>
    </interactant>
    <organismsDiffer>false</organismsDiffer>
    <experiments>3</experiments>
</comment>
<comment type="interaction">
    <interactant intactId="EBI-395959">
        <id>Q15287</id>
    </interactant>
    <interactant intactId="EBI-10290827">
        <id>Q96LP2</id>
        <label>FAM81B</label>
    </interactant>
    <organismsDiffer>false</organismsDiffer>
    <experiments>3</experiments>
</comment>
<comment type="interaction">
    <interactant intactId="EBI-395959">
        <id>Q15287</id>
    </interactant>
    <interactant intactId="EBI-5916454">
        <id>A6NEM1</id>
        <label>GOLGA6L9</label>
    </interactant>
    <organismsDiffer>false</organismsDiffer>
    <experiments>3</experiments>
</comment>
<comment type="interaction">
    <interactant intactId="EBI-395959">
        <id>Q15287</id>
    </interactant>
    <interactant intactId="EBI-5460660">
        <id>Q96MH2</id>
        <label>HEXIM2</label>
    </interactant>
    <organismsDiffer>false</organismsDiffer>
    <experiments>3</experiments>
</comment>
<comment type="interaction">
    <interactant intactId="EBI-395959">
        <id>Q15287</id>
    </interactant>
    <interactant intactId="EBI-3920396">
        <id>Q6ZUT1</id>
        <label>NKAPD1</label>
    </interactant>
    <organismsDiffer>false</organismsDiffer>
    <experiments>5</experiments>
</comment>
<comment type="interaction">
    <interactant intactId="EBI-395959">
        <id>Q15287</id>
    </interactant>
    <interactant intactId="EBI-79165">
        <id>Q9NRD5</id>
        <label>PICK1</label>
    </interactant>
    <organismsDiffer>false</organismsDiffer>
    <experiments>3</experiments>
</comment>
<comment type="interaction">
    <interactant intactId="EBI-395959">
        <id>Q15287</id>
    </interactant>
    <interactant intactId="EBI-1050964">
        <id>O43586</id>
        <label>PSTPIP1</label>
    </interactant>
    <organismsDiffer>false</organismsDiffer>
    <experiments>3</experiments>
</comment>
<comment type="interaction">
    <interactant intactId="EBI-395959">
        <id>Q15287</id>
    </interactant>
    <interactant intactId="EBI-8642021">
        <id>Q15415</id>
        <label>RBMY1J</label>
    </interactant>
    <organismsDiffer>false</organismsDiffer>
    <experiments>3</experiments>
</comment>
<comment type="interaction">
    <interactant intactId="EBI-395959">
        <id>Q15287</id>
    </interactant>
    <interactant intactId="EBI-308619">
        <id>Q15020</id>
        <label>SART3</label>
    </interactant>
    <organismsDiffer>false</organismsDiffer>
    <experiments>5</experiments>
</comment>
<comment type="interaction">
    <interactant intactId="EBI-395959">
        <id>Q15287</id>
    </interactant>
    <interactant intactId="EBI-742426">
        <id>Q9H190</id>
        <label>SDCBP2</label>
    </interactant>
    <organismsDiffer>false</organismsDiffer>
    <experiments>4</experiments>
</comment>
<comment type="interaction">
    <interactant intactId="EBI-395959">
        <id>Q15287</id>
    </interactant>
    <interactant intactId="EBI-539478">
        <id>Q96SB4</id>
        <label>SRPK1</label>
    </interactant>
    <organismsDiffer>false</organismsDiffer>
    <experiments>5</experiments>
</comment>
<comment type="interaction">
    <interactant intactId="EBI-395959">
        <id>Q15287</id>
    </interactant>
    <interactant intactId="EBI-593303">
        <id>P78362</id>
        <label>SRPK2</label>
    </interactant>
    <organismsDiffer>false</organismsDiffer>
    <experiments>7</experiments>
</comment>
<comment type="interaction">
    <interactant intactId="EBI-395959">
        <id>Q15287</id>
    </interactant>
    <interactant intactId="EBI-3867173">
        <id>A7MD48</id>
        <label>SRRM4</label>
    </interactant>
    <organismsDiffer>false</organismsDiffer>
    <experiments>3</experiments>
</comment>
<comment type="interaction">
    <interactant intactId="EBI-395959">
        <id>Q15287</id>
    </interactant>
    <interactant intactId="EBI-353655">
        <id>O75494</id>
        <label>SRSF10</label>
    </interactant>
    <organismsDiffer>false</organismsDiffer>
    <experiments>4</experiments>
</comment>
<comment type="interaction">
    <interactant intactId="EBI-395959">
        <id>Q15287</id>
    </interactant>
    <interactant intactId="EBI-372557">
        <id>P84103</id>
        <label>SRSF3</label>
    </interactant>
    <organismsDiffer>false</organismsDiffer>
    <experiments>3</experiments>
</comment>
<comment type="interaction">
    <interactant intactId="EBI-395959">
        <id>Q15287</id>
    </interactant>
    <interactant intactId="EBI-745230">
        <id>Q13247</id>
        <label>SRSF6</label>
    </interactant>
    <organismsDiffer>false</organismsDiffer>
    <experiments>3</experiments>
</comment>
<comment type="interaction">
    <interactant intactId="EBI-395959">
        <id>Q15287</id>
    </interactant>
    <interactant intactId="EBI-398885">
        <id>Q16629</id>
        <label>SRSF7</label>
    </interactant>
    <organismsDiffer>false</organismsDiffer>
    <experiments>4</experiments>
</comment>
<comment type="interaction">
    <interactant intactId="EBI-395959">
        <id>Q15287</id>
    </interactant>
    <interactant intactId="EBI-2949710">
        <id>Q13242</id>
        <label>SRSF9</label>
    </interactant>
    <organismsDiffer>false</organismsDiffer>
    <experiments>3</experiments>
</comment>
<comment type="interaction">
    <interactant intactId="EBI-395959">
        <id>Q15287</id>
    </interactant>
    <interactant intactId="EBI-714135">
        <id>O75558</id>
        <label>STX11</label>
    </interactant>
    <organismsDiffer>false</organismsDiffer>
    <experiments>3</experiments>
</comment>
<comment type="interaction">
    <interactant intactId="EBI-395959">
        <id>Q15287</id>
    </interactant>
    <interactant intactId="EBI-2685506">
        <id>Q13595</id>
        <label>TRA2A</label>
    </interactant>
    <organismsDiffer>false</organismsDiffer>
    <experiments>5</experiments>
</comment>
<comment type="interaction">
    <interactant intactId="EBI-395959">
        <id>Q15287</id>
    </interactant>
    <interactant intactId="EBI-2849854">
        <id>Q96MU7</id>
        <label>YTHDC1</label>
    </interactant>
    <organismsDiffer>false</organismsDiffer>
    <experiments>3</experiments>
</comment>
<comment type="interaction">
    <interactant intactId="EBI-395959">
        <id>Q15287</id>
    </interactant>
    <interactant intactId="EBI-741694">
        <id>P49910</id>
        <label>ZNF165</label>
    </interactant>
    <organismsDiffer>false</organismsDiffer>
    <experiments>3</experiments>
</comment>
<comment type="interaction">
    <interactant intactId="EBI-395959">
        <id>Q15287</id>
    </interactant>
    <interactant intactId="EBI-10754950">
        <id>Q9HBT8</id>
        <label>ZNF286A</label>
    </interactant>
    <organismsDiffer>false</organismsDiffer>
    <experiments>3</experiments>
</comment>
<comment type="interaction">
    <interactant intactId="EBI-395959">
        <id>Q15287</id>
    </interactant>
    <interactant intactId="EBI-2818408">
        <id>Q14585</id>
        <label>ZNF345</label>
    </interactant>
    <organismsDiffer>false</organismsDiffer>
    <experiments>3</experiments>
</comment>
<comment type="interaction">
    <interactant intactId="EBI-395959">
        <id>Q15287</id>
    </interactant>
    <interactant intactId="EBI-10211248">
        <id>Q53GI3</id>
        <label>ZNF394</label>
    </interactant>
    <organismsDiffer>false</organismsDiffer>
    <experiments>3</experiments>
</comment>
<comment type="interaction">
    <interactant intactId="EBI-395959">
        <id>Q15287</id>
    </interactant>
    <interactant intactId="EBI-12700258">
        <id>P51814-6</id>
        <label>ZNF41</label>
    </interactant>
    <organismsDiffer>false</organismsDiffer>
    <experiments>3</experiments>
</comment>
<comment type="interaction">
    <interactant intactId="EBI-395959">
        <id>Q15287</id>
    </interactant>
    <interactant intactId="EBI-12376497">
        <id>Q6AZW8</id>
        <label>ZNF660</label>
    </interactant>
    <organismsDiffer>false</organismsDiffer>
    <experiments>3</experiments>
</comment>
<comment type="interaction">
    <interactant intactId="EBI-395959">
        <id>Q15287</id>
    </interactant>
    <interactant intactId="EBI-527853">
        <id>Q9UGI0</id>
        <label>ZRANB1</label>
    </interactant>
    <organismsDiffer>false</organismsDiffer>
    <experiments>3</experiments>
</comment>
<comment type="interaction">
    <interactant intactId="EBI-395959">
        <id>Q15287</id>
    </interactant>
    <interactant intactId="EBI-11793064">
        <id>Q86W11</id>
        <label>ZSCAN30</label>
    </interactant>
    <organismsDiffer>false</organismsDiffer>
    <experiments>3</experiments>
</comment>
<comment type="interaction">
    <interactant intactId="EBI-15972541">
        <id>Q15287-1</id>
    </interactant>
    <interactant intactId="EBI-5279966">
        <id>Q9UKV3-2</id>
        <label>ACIN1</label>
    </interactant>
    <organismsDiffer>false</organismsDiffer>
    <experiments>4</experiments>
</comment>
<comment type="interaction">
    <interactant intactId="EBI-15972541">
        <id>Q15287-1</id>
    </interactant>
    <interactant intactId="EBI-681904">
        <id>Q9H307</id>
        <label>PNN</label>
    </interactant>
    <organismsDiffer>false</organismsDiffer>
    <experiments>3</experiments>
</comment>
<comment type="interaction">
    <interactant intactId="EBI-15972541">
        <id>Q15287-1</id>
    </interactant>
    <interactant intactId="EBI-3418150">
        <id>Q9VJ12</id>
        <label>Acn</label>
    </interactant>
    <organismsDiffer>true</organismsDiffer>
    <experiments>4</experiments>
</comment>
<comment type="subcellular location">
    <subcellularLocation>
        <location>Nucleus</location>
    </subcellularLocation>
    <subcellularLocation>
        <location>Nucleus speckle</location>
    </subcellularLocation>
    <subcellularLocation>
        <location>Cytoplasm</location>
    </subcellularLocation>
    <text>Nucleocytoplasmic shuttling protein. Colocalizes with the core EJC, ALYREF/THOC4, NXF1 and UAP56 in the nucleus and nuclear speckles.</text>
</comment>
<comment type="alternative products">
    <event type="alternative splicing"/>
    <isoform>
        <id>Q15287-1</id>
        <name>1</name>
        <sequence type="displayed"/>
    </isoform>
    <isoform>
        <id>Q15287-2</id>
        <name>2</name>
        <sequence type="described" ref="VSP_016243"/>
    </isoform>
    <isoform>
        <id>Q15287-3</id>
        <name>3</name>
        <sequence type="described" ref="VSP_016243 VSP_037601"/>
    </isoform>
</comment>
<comment type="tissue specificity">
    <text evidence="20">Ubiquitous.</text>
</comment>
<comment type="domain">
    <text>The RRM domain is required for the formation of the ASAP complex.</text>
</comment>
<comment type="PTM">
    <text evidence="13">Phosphorylated on one or more of the four Ser/Thr residues (Ser-43, Thr-49, Ser-52 or Ser-53). Ser-53 phosphorylation site is important for splicing and translation stimulation activity in vitro.</text>
</comment>
<comment type="similarity">
    <text evidence="24">Belongs to the splicing factor SR family.</text>
</comment>